<evidence type="ECO:0000255" key="1">
    <source>
        <dbReference type="HAMAP-Rule" id="MF_01840"/>
    </source>
</evidence>
<dbReference type="EC" id="1.14.13.81" evidence="1"/>
<dbReference type="EMBL" id="CT971583">
    <property type="protein sequence ID" value="CAK23528.1"/>
    <property type="molecule type" value="Genomic_DNA"/>
</dbReference>
<dbReference type="SMR" id="A5GKR3"/>
<dbReference type="STRING" id="32051.SynWH7803_1102"/>
<dbReference type="KEGG" id="syx:SynWH7803_1102"/>
<dbReference type="eggNOG" id="COG1633">
    <property type="taxonomic scope" value="Bacteria"/>
</dbReference>
<dbReference type="HOGENOM" id="CLU_048037_0_0_3"/>
<dbReference type="OrthoDB" id="141643at2"/>
<dbReference type="UniPathway" id="UPA00670"/>
<dbReference type="Proteomes" id="UP000001566">
    <property type="component" value="Chromosome"/>
</dbReference>
<dbReference type="GO" id="GO:0005506">
    <property type="term" value="F:iron ion binding"/>
    <property type="evidence" value="ECO:0007669"/>
    <property type="project" value="UniProtKB-UniRule"/>
</dbReference>
<dbReference type="GO" id="GO:0048529">
    <property type="term" value="F:magnesium-protoporphyrin IX monomethyl ester (oxidative) cyclase activity"/>
    <property type="evidence" value="ECO:0007669"/>
    <property type="project" value="UniProtKB-UniRule"/>
</dbReference>
<dbReference type="GO" id="GO:0036068">
    <property type="term" value="P:light-independent chlorophyll biosynthetic process"/>
    <property type="evidence" value="ECO:0007669"/>
    <property type="project" value="UniProtKB-UniRule"/>
</dbReference>
<dbReference type="GO" id="GO:0015979">
    <property type="term" value="P:photosynthesis"/>
    <property type="evidence" value="ECO:0007669"/>
    <property type="project" value="UniProtKB-UniRule"/>
</dbReference>
<dbReference type="CDD" id="cd01047">
    <property type="entry name" value="ACSF"/>
    <property type="match status" value="1"/>
</dbReference>
<dbReference type="HAMAP" id="MF_01840">
    <property type="entry name" value="AcsF"/>
    <property type="match status" value="1"/>
</dbReference>
<dbReference type="InterPro" id="IPR008434">
    <property type="entry name" value="AcsF"/>
</dbReference>
<dbReference type="InterPro" id="IPR009078">
    <property type="entry name" value="Ferritin-like_SF"/>
</dbReference>
<dbReference type="InterPro" id="IPR003251">
    <property type="entry name" value="Rr_diiron-bd_dom"/>
</dbReference>
<dbReference type="NCBIfam" id="TIGR02029">
    <property type="entry name" value="AcsF"/>
    <property type="match status" value="1"/>
</dbReference>
<dbReference type="NCBIfam" id="NF010172">
    <property type="entry name" value="PRK13654.1"/>
    <property type="match status" value="1"/>
</dbReference>
<dbReference type="PANTHER" id="PTHR31053">
    <property type="entry name" value="MAGNESIUM-PROTOPORPHYRIN IX MONOMETHYL ESTER [OXIDATIVE] CYCLASE, CHLOROPLASTIC"/>
    <property type="match status" value="1"/>
</dbReference>
<dbReference type="PANTHER" id="PTHR31053:SF2">
    <property type="entry name" value="MAGNESIUM-PROTOPORPHYRIN IX MONOMETHYL ESTER [OXIDATIVE] CYCLASE, CHLOROPLASTIC"/>
    <property type="match status" value="1"/>
</dbReference>
<dbReference type="Pfam" id="PF02915">
    <property type="entry name" value="Rubrerythrin"/>
    <property type="match status" value="1"/>
</dbReference>
<dbReference type="SUPFAM" id="SSF47240">
    <property type="entry name" value="Ferritin-like"/>
    <property type="match status" value="1"/>
</dbReference>
<gene>
    <name evidence="1" type="primary">acsF</name>
    <name type="ordered locus">SynWH7803_1102</name>
</gene>
<comment type="function">
    <text evidence="1">Catalyzes the formation of the isocyclic ring in chlorophyll biosynthesis. Mediates the cyclase reaction, which results in the formation of divinylprotochlorophyllide (Pchlide) characteristic of all chlorophylls from magnesium-protoporphyrin IX 13-monomethyl ester (MgPMME).</text>
</comment>
<comment type="catalytic activity">
    <reaction evidence="1">
        <text>Mg-protoporphyrin IX 13-monomethyl ester + 3 NADPH + 3 O2 + 2 H(+) = 3,8-divinyl protochlorophyllide a + 3 NADP(+) + 5 H2O</text>
        <dbReference type="Rhea" id="RHEA:33235"/>
        <dbReference type="ChEBI" id="CHEBI:15377"/>
        <dbReference type="ChEBI" id="CHEBI:15378"/>
        <dbReference type="ChEBI" id="CHEBI:15379"/>
        <dbReference type="ChEBI" id="CHEBI:57783"/>
        <dbReference type="ChEBI" id="CHEBI:58349"/>
        <dbReference type="ChEBI" id="CHEBI:58632"/>
        <dbReference type="ChEBI" id="CHEBI:60491"/>
        <dbReference type="EC" id="1.14.13.81"/>
    </reaction>
</comment>
<comment type="cofactor">
    <cofactor evidence="1">
        <name>Fe cation</name>
        <dbReference type="ChEBI" id="CHEBI:24875"/>
    </cofactor>
</comment>
<comment type="pathway">
    <text evidence="1">Porphyrin-containing compound metabolism; chlorophyll biosynthesis (light-independent).</text>
</comment>
<comment type="similarity">
    <text evidence="1">Belongs to the AcsF family.</text>
</comment>
<organism>
    <name type="scientific">Synechococcus sp. (strain WH7803)</name>
    <dbReference type="NCBI Taxonomy" id="32051"/>
    <lineage>
        <taxon>Bacteria</taxon>
        <taxon>Bacillati</taxon>
        <taxon>Cyanobacteriota</taxon>
        <taxon>Cyanophyceae</taxon>
        <taxon>Synechococcales</taxon>
        <taxon>Synechococcaceae</taxon>
        <taxon>Synechococcus</taxon>
    </lineage>
</organism>
<feature type="chain" id="PRO_1000070553" description="Magnesium-protoporphyrin IX monomethyl ester [oxidative] cyclase">
    <location>
        <begin position="1"/>
        <end position="360"/>
    </location>
</feature>
<sequence length="360" mass="41422">MVPPTAVNDAPAAGSAVSVKDPAKDTILTPRFYTTDFEAMAAMDLRPNEAELEAICEEFRKDYNRHHFVRNDEFEGAADKLDPETRRVFVEFLEQSCTSEFSGFLLYKELSRRIKTRNPLLAECFAHMARDEARHAGFLNKSMSDFGLQLDLGFLTANKSYTFFQPKFIFYATYLSEKIGYWRYITIFRHLEKNPDSKIFPIFNFFENWCQDENRHGDFFDALMKAQPNTVRGFRARLWCRFFLLAVFATMYVRDVARKEFYEALGLDARDYDRLVIDKTNETTARVFPVVLDVKNPKFYAGLENLVTNNAALDAVDASASSAPIKVLRKLPHWIANGAQMASLFLMAPVRSESFQPSVR</sequence>
<keyword id="KW-0149">Chlorophyll biosynthesis</keyword>
<keyword id="KW-0408">Iron</keyword>
<keyword id="KW-0479">Metal-binding</keyword>
<keyword id="KW-0521">NADP</keyword>
<keyword id="KW-0560">Oxidoreductase</keyword>
<keyword id="KW-0602">Photosynthesis</keyword>
<keyword id="KW-1185">Reference proteome</keyword>
<protein>
    <recommendedName>
        <fullName evidence="1">Magnesium-protoporphyrin IX monomethyl ester [oxidative] cyclase</fullName>
        <shortName evidence="1">Mg-protoporphyrin IX monomethyl ester oxidative cyclase</shortName>
        <ecNumber evidence="1">1.14.13.81</ecNumber>
    </recommendedName>
</protein>
<accession>A5GKR3</accession>
<reference key="1">
    <citation type="submission" date="2006-05" db="EMBL/GenBank/DDBJ databases">
        <authorList>
            <consortium name="Genoscope"/>
        </authorList>
    </citation>
    <scope>NUCLEOTIDE SEQUENCE [LARGE SCALE GENOMIC DNA]</scope>
    <source>
        <strain>WH7803</strain>
    </source>
</reference>
<proteinExistence type="inferred from homology"/>
<name>ACSF_SYNPW</name>